<reference key="1">
    <citation type="submission" date="1997-11" db="EMBL/GenBank/DDBJ databases">
        <authorList>
            <person name="Sastre L."/>
        </authorList>
    </citation>
    <scope>NUCLEOTIDE SEQUENCE [MRNA]</scope>
</reference>
<protein>
    <recommendedName>
        <fullName>TATA-box-binding protein</fullName>
    </recommendedName>
    <alternativeName>
        <fullName>TATA sequence-binding protein</fullName>
        <shortName>TBP</shortName>
    </alternativeName>
    <alternativeName>
        <fullName>TATA-binding factor</fullName>
    </alternativeName>
    <alternativeName>
        <fullName>TATA-box factor</fullName>
    </alternativeName>
    <alternativeName>
        <fullName>Transcription initiation factor TFIID TBP subunit</fullName>
    </alternativeName>
</protein>
<keyword id="KW-0238">DNA-binding</keyword>
<keyword id="KW-0539">Nucleus</keyword>
<keyword id="KW-0677">Repeat</keyword>
<keyword id="KW-0804">Transcription</keyword>
<dbReference type="EMBL" id="AJ002478">
    <property type="protein sequence ID" value="CAA05488.1"/>
    <property type="molecule type" value="mRNA"/>
</dbReference>
<dbReference type="SMR" id="O17488"/>
<dbReference type="GO" id="GO:0005634">
    <property type="term" value="C:nucleus"/>
    <property type="evidence" value="ECO:0007669"/>
    <property type="project" value="UniProtKB-SubCell"/>
</dbReference>
<dbReference type="GO" id="GO:0003677">
    <property type="term" value="F:DNA binding"/>
    <property type="evidence" value="ECO:0007669"/>
    <property type="project" value="UniProtKB-KW"/>
</dbReference>
<dbReference type="GO" id="GO:0006352">
    <property type="term" value="P:DNA-templated transcription initiation"/>
    <property type="evidence" value="ECO:0007669"/>
    <property type="project" value="InterPro"/>
</dbReference>
<dbReference type="CDD" id="cd04516">
    <property type="entry name" value="TBP_eukaryotes"/>
    <property type="match status" value="1"/>
</dbReference>
<dbReference type="FunFam" id="3.30.310.10:FF:000001">
    <property type="entry name" value="TATA-box-binding protein 2"/>
    <property type="match status" value="1"/>
</dbReference>
<dbReference type="FunFam" id="3.30.310.10:FF:000002">
    <property type="entry name" value="TATA-box-binding protein 2"/>
    <property type="match status" value="1"/>
</dbReference>
<dbReference type="Gene3D" id="3.30.310.10">
    <property type="entry name" value="TATA-Binding Protein"/>
    <property type="match status" value="2"/>
</dbReference>
<dbReference type="HAMAP" id="MF_00408">
    <property type="entry name" value="TATA_bind_prot_arch"/>
    <property type="match status" value="1"/>
</dbReference>
<dbReference type="InterPro" id="IPR000814">
    <property type="entry name" value="TBP"/>
</dbReference>
<dbReference type="InterPro" id="IPR030491">
    <property type="entry name" value="TBP_CS"/>
</dbReference>
<dbReference type="InterPro" id="IPR012295">
    <property type="entry name" value="TBP_dom_sf"/>
</dbReference>
<dbReference type="InterPro" id="IPR033710">
    <property type="entry name" value="TBP_eukaryotic"/>
</dbReference>
<dbReference type="PANTHER" id="PTHR10126">
    <property type="entry name" value="TATA-BOX BINDING PROTEIN"/>
    <property type="match status" value="1"/>
</dbReference>
<dbReference type="Pfam" id="PF00352">
    <property type="entry name" value="TBP"/>
    <property type="match status" value="2"/>
</dbReference>
<dbReference type="PRINTS" id="PR00686">
    <property type="entry name" value="TIFACTORIID"/>
</dbReference>
<dbReference type="SUPFAM" id="SSF55945">
    <property type="entry name" value="TATA-box binding protein-like"/>
    <property type="match status" value="2"/>
</dbReference>
<dbReference type="PROSITE" id="PS00351">
    <property type="entry name" value="TFIID"/>
    <property type="match status" value="2"/>
</dbReference>
<organism>
    <name type="scientific">Artemia franciscana</name>
    <name type="common">Brine shrimp</name>
    <name type="synonym">Artemia sanfranciscana</name>
    <dbReference type="NCBI Taxonomy" id="6661"/>
    <lineage>
        <taxon>Eukaryota</taxon>
        <taxon>Metazoa</taxon>
        <taxon>Ecdysozoa</taxon>
        <taxon>Arthropoda</taxon>
        <taxon>Crustacea</taxon>
        <taxon>Branchiopoda</taxon>
        <taxon>Anostraca</taxon>
        <taxon>Artemiidae</taxon>
        <taxon>Artemia</taxon>
    </lineage>
</organism>
<accession>O17488</accession>
<sequence length="275" mass="30605">MDNMLPSPGYNIPSIGTPIHHQEDESIQTQQQQQTPRHPASFGMNLPHLQHANISQTQDNHMMSPAIQRQHEGSMSIYGPGTPAPATPHTPASVADPGIIPVLENIVSTVNLGCRLDLKKIALQARNAEYNPKRFAAVIMRIREPRTTALIFSSGKMVCTGAKSEEDSRLAARKYARIVQKLGFSAKFLDFKIQNMVGSCDVKFPIRLEGLVLTHGQFSSYEPELFPGLIYRMVKPRIVLLIFVSGKVVLTGAKVRQEIYDAFENIYPILKGFKK</sequence>
<evidence type="ECO:0000256" key="1">
    <source>
        <dbReference type="SAM" id="MobiDB-lite"/>
    </source>
</evidence>
<evidence type="ECO:0000305" key="2"/>
<proteinExistence type="evidence at transcript level"/>
<comment type="function">
    <text>General transcription factor that functions at the core of the DNA-binding multiprotein factor TFIID. Binding of TFIID to the TATA box is the initial transcriptional step of the pre-initiation complex (PIC), playing a role in the activation of eukaryotic genes transcribed by RNA polymerase II.</text>
</comment>
<comment type="subunit">
    <text>Belongs to the TFIID complex together with the TBP-associated factors (TAFs). Binds DNA as monomer.</text>
</comment>
<comment type="subcellular location">
    <subcellularLocation>
        <location>Nucleus</location>
    </subcellularLocation>
</comment>
<comment type="similarity">
    <text evidence="2">Belongs to the TBP family.</text>
</comment>
<feature type="chain" id="PRO_0000153967" description="TATA-box-binding protein">
    <location>
        <begin position="1"/>
        <end position="275"/>
    </location>
</feature>
<feature type="repeat" description="1">
    <location>
        <begin position="103"/>
        <end position="179"/>
    </location>
</feature>
<feature type="repeat" description="2">
    <location>
        <begin position="193"/>
        <end position="270"/>
    </location>
</feature>
<feature type="region of interest" description="Disordered" evidence="1">
    <location>
        <begin position="23"/>
        <end position="45"/>
    </location>
</feature>
<feature type="region of interest" description="Disordered" evidence="1">
    <location>
        <begin position="73"/>
        <end position="92"/>
    </location>
</feature>
<name>TBP_ARTSF</name>